<feature type="chain" id="PRO_1000083870" description="Urease accessory protein UreE">
    <location>
        <begin position="1"/>
        <end position="210"/>
    </location>
</feature>
<feature type="region of interest" description="Disordered" evidence="2">
    <location>
        <begin position="144"/>
        <end position="210"/>
    </location>
</feature>
<feature type="compositionally biased region" description="Basic and acidic residues" evidence="2">
    <location>
        <begin position="156"/>
        <end position="202"/>
    </location>
</feature>
<reference key="1">
    <citation type="submission" date="2006-12" db="EMBL/GenBank/DDBJ databases">
        <title>Complete sequence of Acidovorax avenae subsp. citrulli AAC00-1.</title>
        <authorList>
            <person name="Copeland A."/>
            <person name="Lucas S."/>
            <person name="Lapidus A."/>
            <person name="Barry K."/>
            <person name="Detter J.C."/>
            <person name="Glavina del Rio T."/>
            <person name="Dalin E."/>
            <person name="Tice H."/>
            <person name="Pitluck S."/>
            <person name="Kiss H."/>
            <person name="Brettin T."/>
            <person name="Bruce D."/>
            <person name="Han C."/>
            <person name="Tapia R."/>
            <person name="Gilna P."/>
            <person name="Schmutz J."/>
            <person name="Larimer F."/>
            <person name="Land M."/>
            <person name="Hauser L."/>
            <person name="Kyrpides N."/>
            <person name="Kim E."/>
            <person name="Stahl D."/>
            <person name="Richardson P."/>
        </authorList>
    </citation>
    <scope>NUCLEOTIDE SEQUENCE [LARGE SCALE GENOMIC DNA]</scope>
    <source>
        <strain>AAC00-1</strain>
    </source>
</reference>
<comment type="function">
    <text evidence="1">Involved in urease metallocenter assembly. Binds nickel. Probably functions as a nickel donor during metallocenter assembly.</text>
</comment>
<comment type="subcellular location">
    <subcellularLocation>
        <location evidence="1">Cytoplasm</location>
    </subcellularLocation>
</comment>
<comment type="similarity">
    <text evidence="1">Belongs to the UreE family.</text>
</comment>
<sequence length="210" mass="22976">MLTANKLLPQGHGLAPVLLKRAATVELDWDVRQKSRFAATDSTGRELGVFLPRGTVVRGGDVLVAEDGSMVRVVAAPQAVLRITHCTQHGSPFDLTRAAYHLGNRHVPIELRPDHLQIEPDHVLADMLRAMHLIVTEQQAPFEPEGGAYAAGGHGHGHDHPHHDHGHDHAHAHAHGTEACDHEHSHDHDCGHHHDHGQDYGHAHPHSLAR</sequence>
<keyword id="KW-0143">Chaperone</keyword>
<keyword id="KW-0963">Cytoplasm</keyword>
<keyword id="KW-0533">Nickel</keyword>
<keyword id="KW-0996">Nickel insertion</keyword>
<organism>
    <name type="scientific">Paracidovorax citrulli (strain AAC00-1)</name>
    <name type="common">Acidovorax citrulli</name>
    <dbReference type="NCBI Taxonomy" id="397945"/>
    <lineage>
        <taxon>Bacteria</taxon>
        <taxon>Pseudomonadati</taxon>
        <taxon>Pseudomonadota</taxon>
        <taxon>Betaproteobacteria</taxon>
        <taxon>Burkholderiales</taxon>
        <taxon>Comamonadaceae</taxon>
        <taxon>Paracidovorax</taxon>
    </lineage>
</organism>
<gene>
    <name evidence="1" type="primary">ureE</name>
    <name type="ordered locus">Aave_3531</name>
</gene>
<accession>A1TSZ8</accession>
<dbReference type="EMBL" id="CP000512">
    <property type="protein sequence ID" value="ABM34086.1"/>
    <property type="molecule type" value="Genomic_DNA"/>
</dbReference>
<dbReference type="RefSeq" id="WP_011796583.1">
    <property type="nucleotide sequence ID" value="NC_008752.1"/>
</dbReference>
<dbReference type="SMR" id="A1TSZ8"/>
<dbReference type="STRING" id="397945.Aave_3531"/>
<dbReference type="KEGG" id="aav:Aave_3531"/>
<dbReference type="eggNOG" id="COG2371">
    <property type="taxonomic scope" value="Bacteria"/>
</dbReference>
<dbReference type="HOGENOM" id="CLU_093757_0_0_4"/>
<dbReference type="OrthoDB" id="5421304at2"/>
<dbReference type="Proteomes" id="UP000002596">
    <property type="component" value="Chromosome"/>
</dbReference>
<dbReference type="GO" id="GO:0005737">
    <property type="term" value="C:cytoplasm"/>
    <property type="evidence" value="ECO:0007669"/>
    <property type="project" value="UniProtKB-SubCell"/>
</dbReference>
<dbReference type="GO" id="GO:0016151">
    <property type="term" value="F:nickel cation binding"/>
    <property type="evidence" value="ECO:0007669"/>
    <property type="project" value="UniProtKB-UniRule"/>
</dbReference>
<dbReference type="GO" id="GO:0051082">
    <property type="term" value="F:unfolded protein binding"/>
    <property type="evidence" value="ECO:0007669"/>
    <property type="project" value="UniProtKB-UniRule"/>
</dbReference>
<dbReference type="GO" id="GO:0006457">
    <property type="term" value="P:protein folding"/>
    <property type="evidence" value="ECO:0007669"/>
    <property type="project" value="InterPro"/>
</dbReference>
<dbReference type="GO" id="GO:0065003">
    <property type="term" value="P:protein-containing complex assembly"/>
    <property type="evidence" value="ECO:0007669"/>
    <property type="project" value="InterPro"/>
</dbReference>
<dbReference type="GO" id="GO:0019627">
    <property type="term" value="P:urea metabolic process"/>
    <property type="evidence" value="ECO:0007669"/>
    <property type="project" value="InterPro"/>
</dbReference>
<dbReference type="CDD" id="cd00571">
    <property type="entry name" value="UreE"/>
    <property type="match status" value="1"/>
</dbReference>
<dbReference type="Gene3D" id="2.60.260.20">
    <property type="entry name" value="Urease metallochaperone UreE, N-terminal domain"/>
    <property type="match status" value="1"/>
</dbReference>
<dbReference type="Gene3D" id="3.30.70.790">
    <property type="entry name" value="UreE, C-terminal domain"/>
    <property type="match status" value="1"/>
</dbReference>
<dbReference type="HAMAP" id="MF_00822">
    <property type="entry name" value="UreE"/>
    <property type="match status" value="1"/>
</dbReference>
<dbReference type="InterPro" id="IPR012406">
    <property type="entry name" value="UreE"/>
</dbReference>
<dbReference type="InterPro" id="IPR007864">
    <property type="entry name" value="UreE_C_dom"/>
</dbReference>
<dbReference type="InterPro" id="IPR004029">
    <property type="entry name" value="UreE_N"/>
</dbReference>
<dbReference type="InterPro" id="IPR036118">
    <property type="entry name" value="UreE_N_sf"/>
</dbReference>
<dbReference type="NCBIfam" id="NF009751">
    <property type="entry name" value="PRK13261.1-1"/>
    <property type="match status" value="1"/>
</dbReference>
<dbReference type="NCBIfam" id="NF009762">
    <property type="entry name" value="PRK13263.1"/>
    <property type="match status" value="1"/>
</dbReference>
<dbReference type="Pfam" id="PF05194">
    <property type="entry name" value="UreE_C"/>
    <property type="match status" value="1"/>
</dbReference>
<dbReference type="Pfam" id="PF02814">
    <property type="entry name" value="UreE_N"/>
    <property type="match status" value="1"/>
</dbReference>
<dbReference type="SMART" id="SM00988">
    <property type="entry name" value="UreE_N"/>
    <property type="match status" value="1"/>
</dbReference>
<dbReference type="SUPFAM" id="SSF69737">
    <property type="entry name" value="Urease metallochaperone UreE, C-terminal domain"/>
    <property type="match status" value="1"/>
</dbReference>
<dbReference type="SUPFAM" id="SSF69287">
    <property type="entry name" value="Urease metallochaperone UreE, N-terminal domain"/>
    <property type="match status" value="1"/>
</dbReference>
<proteinExistence type="inferred from homology"/>
<name>UREE_PARC0</name>
<protein>
    <recommendedName>
        <fullName evidence="1">Urease accessory protein UreE</fullName>
    </recommendedName>
</protein>
<evidence type="ECO:0000255" key="1">
    <source>
        <dbReference type="HAMAP-Rule" id="MF_00822"/>
    </source>
</evidence>
<evidence type="ECO:0000256" key="2">
    <source>
        <dbReference type="SAM" id="MobiDB-lite"/>
    </source>
</evidence>